<dbReference type="EMBL" id="CP000051">
    <property type="protein sequence ID" value="AAX51118.1"/>
    <property type="molecule type" value="Genomic_DNA"/>
</dbReference>
<dbReference type="RefSeq" id="WP_009872966.1">
    <property type="nucleotide sequence ID" value="NC_007429.1"/>
</dbReference>
<dbReference type="SMR" id="Q3KKK4"/>
<dbReference type="KEGG" id="cta:CTA_0910"/>
<dbReference type="HOGENOM" id="CLU_123265_0_1_0"/>
<dbReference type="Proteomes" id="UP000002532">
    <property type="component" value="Chromosome"/>
</dbReference>
<dbReference type="GO" id="GO:1990904">
    <property type="term" value="C:ribonucleoprotein complex"/>
    <property type="evidence" value="ECO:0007669"/>
    <property type="project" value="UniProtKB-KW"/>
</dbReference>
<dbReference type="GO" id="GO:0005840">
    <property type="term" value="C:ribosome"/>
    <property type="evidence" value="ECO:0007669"/>
    <property type="project" value="UniProtKB-KW"/>
</dbReference>
<dbReference type="GO" id="GO:0019843">
    <property type="term" value="F:rRNA binding"/>
    <property type="evidence" value="ECO:0007669"/>
    <property type="project" value="UniProtKB-UniRule"/>
</dbReference>
<dbReference type="GO" id="GO:0003735">
    <property type="term" value="F:structural constituent of ribosome"/>
    <property type="evidence" value="ECO:0007669"/>
    <property type="project" value="InterPro"/>
</dbReference>
<dbReference type="GO" id="GO:0000027">
    <property type="term" value="P:ribosomal large subunit assembly"/>
    <property type="evidence" value="ECO:0007669"/>
    <property type="project" value="UniProtKB-UniRule"/>
</dbReference>
<dbReference type="GO" id="GO:0006412">
    <property type="term" value="P:translation"/>
    <property type="evidence" value="ECO:0007669"/>
    <property type="project" value="InterPro"/>
</dbReference>
<dbReference type="CDD" id="cd07026">
    <property type="entry name" value="Ribosomal_L20"/>
    <property type="match status" value="1"/>
</dbReference>
<dbReference type="FunFam" id="1.10.1900.20:FF:000001">
    <property type="entry name" value="50S ribosomal protein L20"/>
    <property type="match status" value="1"/>
</dbReference>
<dbReference type="Gene3D" id="6.10.160.10">
    <property type="match status" value="1"/>
</dbReference>
<dbReference type="Gene3D" id="1.10.1900.20">
    <property type="entry name" value="Ribosomal protein L20"/>
    <property type="match status" value="1"/>
</dbReference>
<dbReference type="HAMAP" id="MF_00382">
    <property type="entry name" value="Ribosomal_bL20"/>
    <property type="match status" value="1"/>
</dbReference>
<dbReference type="InterPro" id="IPR005813">
    <property type="entry name" value="Ribosomal_bL20"/>
</dbReference>
<dbReference type="InterPro" id="IPR049946">
    <property type="entry name" value="RIBOSOMAL_L20_CS"/>
</dbReference>
<dbReference type="InterPro" id="IPR035566">
    <property type="entry name" value="Ribosomal_protein_bL20_C"/>
</dbReference>
<dbReference type="NCBIfam" id="TIGR01032">
    <property type="entry name" value="rplT_bact"/>
    <property type="match status" value="1"/>
</dbReference>
<dbReference type="PANTHER" id="PTHR10986">
    <property type="entry name" value="39S RIBOSOMAL PROTEIN L20"/>
    <property type="match status" value="1"/>
</dbReference>
<dbReference type="Pfam" id="PF00453">
    <property type="entry name" value="Ribosomal_L20"/>
    <property type="match status" value="1"/>
</dbReference>
<dbReference type="PRINTS" id="PR00062">
    <property type="entry name" value="RIBOSOMALL20"/>
</dbReference>
<dbReference type="SUPFAM" id="SSF74731">
    <property type="entry name" value="Ribosomal protein L20"/>
    <property type="match status" value="1"/>
</dbReference>
<dbReference type="PROSITE" id="PS00937">
    <property type="entry name" value="RIBOSOMAL_L20"/>
    <property type="match status" value="1"/>
</dbReference>
<feature type="chain" id="PRO_0000243668" description="Large ribosomal subunit protein bL20">
    <location>
        <begin position="1"/>
        <end position="123"/>
    </location>
</feature>
<protein>
    <recommendedName>
        <fullName evidence="1">Large ribosomal subunit protein bL20</fullName>
    </recommendedName>
    <alternativeName>
        <fullName evidence="2">50S ribosomal protein L20</fullName>
    </alternativeName>
</protein>
<proteinExistence type="inferred from homology"/>
<sequence>MVRATGSVASRSRRKRVLKQAKGFWGDRKGHFRQSRSSVMRAMAFNYMHRKDRKGDFRSLWITRLNVASRIHGLSYSRLINGLKQAGIHLNRKMLSEMAIHDPQGFAVVATQAKLALEAAVQG</sequence>
<name>RL20_CHLTA</name>
<reference key="1">
    <citation type="journal article" date="2005" name="Infect. Immun.">
        <title>Comparative genomic analysis of Chlamydia trachomatis oculotropic and genitotropic strains.</title>
        <authorList>
            <person name="Carlson J.H."/>
            <person name="Porcella S.F."/>
            <person name="McClarty G."/>
            <person name="Caldwell H.D."/>
        </authorList>
    </citation>
    <scope>NUCLEOTIDE SEQUENCE [LARGE SCALE GENOMIC DNA]</scope>
    <source>
        <strain>ATCC VR-571B / DSM 19440 / HAR-13</strain>
    </source>
</reference>
<keyword id="KW-0687">Ribonucleoprotein</keyword>
<keyword id="KW-0689">Ribosomal protein</keyword>
<keyword id="KW-0694">RNA-binding</keyword>
<keyword id="KW-0699">rRNA-binding</keyword>
<accession>Q3KKK4</accession>
<evidence type="ECO:0000255" key="1">
    <source>
        <dbReference type="HAMAP-Rule" id="MF_00382"/>
    </source>
</evidence>
<evidence type="ECO:0000305" key="2"/>
<organism>
    <name type="scientific">Chlamydia trachomatis serovar A (strain ATCC VR-571B / DSM 19440 / HAR-13)</name>
    <dbReference type="NCBI Taxonomy" id="315277"/>
    <lineage>
        <taxon>Bacteria</taxon>
        <taxon>Pseudomonadati</taxon>
        <taxon>Chlamydiota</taxon>
        <taxon>Chlamydiia</taxon>
        <taxon>Chlamydiales</taxon>
        <taxon>Chlamydiaceae</taxon>
        <taxon>Chlamydia/Chlamydophila group</taxon>
        <taxon>Chlamydia</taxon>
    </lineage>
</organism>
<comment type="function">
    <text evidence="1">Binds directly to 23S ribosomal RNA and is necessary for the in vitro assembly process of the 50S ribosomal subunit. It is not involved in the protein synthesizing functions of that subunit.</text>
</comment>
<comment type="similarity">
    <text evidence="1">Belongs to the bacterial ribosomal protein bL20 family.</text>
</comment>
<gene>
    <name evidence="1" type="primary">rplT</name>
    <name type="ordered locus">CTA_0910</name>
</gene>